<dbReference type="EC" id="3.2.2.28" evidence="1"/>
<dbReference type="EMBL" id="CP001657">
    <property type="protein sequence ID" value="ACT11602.1"/>
    <property type="molecule type" value="Genomic_DNA"/>
</dbReference>
<dbReference type="RefSeq" id="WP_012773254.1">
    <property type="nucleotide sequence ID" value="NC_012917.1"/>
</dbReference>
<dbReference type="SMR" id="C6DKG5"/>
<dbReference type="STRING" id="561230.PC1_0547"/>
<dbReference type="KEGG" id="pct:PC1_0547"/>
<dbReference type="eggNOG" id="COG3663">
    <property type="taxonomic scope" value="Bacteria"/>
</dbReference>
<dbReference type="HOGENOM" id="CLU_042829_3_1_6"/>
<dbReference type="OrthoDB" id="9799921at2"/>
<dbReference type="Proteomes" id="UP000002736">
    <property type="component" value="Chromosome"/>
</dbReference>
<dbReference type="GO" id="GO:0005737">
    <property type="term" value="C:cytoplasm"/>
    <property type="evidence" value="ECO:0007669"/>
    <property type="project" value="UniProtKB-SubCell"/>
</dbReference>
<dbReference type="GO" id="GO:0003677">
    <property type="term" value="F:DNA binding"/>
    <property type="evidence" value="ECO:0007669"/>
    <property type="project" value="UniProtKB-KW"/>
</dbReference>
<dbReference type="GO" id="GO:0008263">
    <property type="term" value="F:pyrimidine-specific mismatch base pair DNA N-glycosylase activity"/>
    <property type="evidence" value="ECO:0007669"/>
    <property type="project" value="UniProtKB-UniRule"/>
</dbReference>
<dbReference type="GO" id="GO:0004844">
    <property type="term" value="F:uracil DNA N-glycosylase activity"/>
    <property type="evidence" value="ECO:0007669"/>
    <property type="project" value="TreeGrafter"/>
</dbReference>
<dbReference type="GO" id="GO:0006285">
    <property type="term" value="P:base-excision repair, AP site formation"/>
    <property type="evidence" value="ECO:0007669"/>
    <property type="project" value="UniProtKB-UniRule"/>
</dbReference>
<dbReference type="CDD" id="cd10028">
    <property type="entry name" value="UDG-F2_TDG_MUG"/>
    <property type="match status" value="1"/>
</dbReference>
<dbReference type="Gene3D" id="3.40.470.10">
    <property type="entry name" value="Uracil-DNA glycosylase-like domain"/>
    <property type="match status" value="1"/>
</dbReference>
<dbReference type="HAMAP" id="MF_01956">
    <property type="entry name" value="MUG"/>
    <property type="match status" value="1"/>
</dbReference>
<dbReference type="InterPro" id="IPR015637">
    <property type="entry name" value="MUG/TDG"/>
</dbReference>
<dbReference type="InterPro" id="IPR023502">
    <property type="entry name" value="MUG_bact"/>
</dbReference>
<dbReference type="InterPro" id="IPR005122">
    <property type="entry name" value="Uracil-DNA_glycosylase-like"/>
</dbReference>
<dbReference type="InterPro" id="IPR036895">
    <property type="entry name" value="Uracil-DNA_glycosylase-like_sf"/>
</dbReference>
<dbReference type="NCBIfam" id="NF007570">
    <property type="entry name" value="PRK10201.1"/>
    <property type="match status" value="1"/>
</dbReference>
<dbReference type="PANTHER" id="PTHR12159">
    <property type="entry name" value="G/T AND G/U MISMATCH-SPECIFIC DNA GLYCOSYLASE"/>
    <property type="match status" value="1"/>
</dbReference>
<dbReference type="PANTHER" id="PTHR12159:SF9">
    <property type="entry name" value="G_T MISMATCH-SPECIFIC THYMINE DNA GLYCOSYLASE"/>
    <property type="match status" value="1"/>
</dbReference>
<dbReference type="Pfam" id="PF03167">
    <property type="entry name" value="UDG"/>
    <property type="match status" value="1"/>
</dbReference>
<dbReference type="SUPFAM" id="SSF52141">
    <property type="entry name" value="Uracil-DNA glycosylase-like"/>
    <property type="match status" value="1"/>
</dbReference>
<evidence type="ECO:0000255" key="1">
    <source>
        <dbReference type="HAMAP-Rule" id="MF_01956"/>
    </source>
</evidence>
<organism>
    <name type="scientific">Pectobacterium carotovorum subsp. carotovorum (strain PC1)</name>
    <dbReference type="NCBI Taxonomy" id="561230"/>
    <lineage>
        <taxon>Bacteria</taxon>
        <taxon>Pseudomonadati</taxon>
        <taxon>Pseudomonadota</taxon>
        <taxon>Gammaproteobacteria</taxon>
        <taxon>Enterobacterales</taxon>
        <taxon>Pectobacteriaceae</taxon>
        <taxon>Pectobacterium</taxon>
    </lineage>
</organism>
<feature type="chain" id="PRO_1000216209" description="G/U mismatch-specific DNA glycosylase">
    <location>
        <begin position="1"/>
        <end position="167"/>
    </location>
</feature>
<name>MUG_PECCP</name>
<keyword id="KW-0963">Cytoplasm</keyword>
<keyword id="KW-0227">DNA damage</keyword>
<keyword id="KW-0228">DNA excision</keyword>
<keyword id="KW-0234">DNA repair</keyword>
<keyword id="KW-0238">DNA-binding</keyword>
<keyword id="KW-0378">Hydrolase</keyword>
<proteinExistence type="inferred from homology"/>
<sequence>MITDILAMNLQVVFCGINPGLSTAHHGYHFANPSNRFWKVIHHVGFTERLLTPAEEQHLLDTGCGITMLVERPTVEATELGRDELLQGGNAIVEKMERYQPRALAVLGKQAFSQAFGIKKVSWGRQSLNIGETQVWVLPNPSGLNRATLESLVASYQELHQALQDKA</sequence>
<comment type="function">
    <text evidence="1">Excises ethenocytosine and uracil, which can arise by alkylation or deamination of cytosine, respectively, from the corresponding mispairs with guanine in ds-DNA. It is capable of hydrolyzing the carbon-nitrogen bond between the sugar-phosphate backbone of the DNA and the mispaired base. The complementary strand guanine functions in substrate recognition. Required for DNA damage lesion repair in stationary-phase cells.</text>
</comment>
<comment type="catalytic activity">
    <reaction evidence="1">
        <text>Specifically hydrolyzes mismatched double-stranded DNA and polynucleotides, releasing free uracil.</text>
        <dbReference type="EC" id="3.2.2.28"/>
    </reaction>
</comment>
<comment type="subunit">
    <text evidence="1">Binds DNA as a monomer.</text>
</comment>
<comment type="subcellular location">
    <subcellularLocation>
        <location evidence="1">Cytoplasm</location>
    </subcellularLocation>
</comment>
<comment type="similarity">
    <text evidence="1">Belongs to the uracil-DNA glycosylase (UDG) superfamily. TDG/mug family.</text>
</comment>
<gene>
    <name evidence="1" type="primary">mug</name>
    <name type="ordered locus">PC1_0547</name>
</gene>
<reference key="1">
    <citation type="submission" date="2009-07" db="EMBL/GenBank/DDBJ databases">
        <title>Complete sequence of Pectobacterium carotovorum subsp. carotovorum PC1.</title>
        <authorList>
            <consortium name="US DOE Joint Genome Institute"/>
            <person name="Lucas S."/>
            <person name="Copeland A."/>
            <person name="Lapidus A."/>
            <person name="Glavina del Rio T."/>
            <person name="Tice H."/>
            <person name="Bruce D."/>
            <person name="Goodwin L."/>
            <person name="Pitluck S."/>
            <person name="Munk A.C."/>
            <person name="Brettin T."/>
            <person name="Detter J.C."/>
            <person name="Han C."/>
            <person name="Tapia R."/>
            <person name="Larimer F."/>
            <person name="Land M."/>
            <person name="Hauser L."/>
            <person name="Kyrpides N."/>
            <person name="Mikhailova N."/>
            <person name="Balakrishnan V."/>
            <person name="Glasner J."/>
            <person name="Perna N.T."/>
        </authorList>
    </citation>
    <scope>NUCLEOTIDE SEQUENCE [LARGE SCALE GENOMIC DNA]</scope>
    <source>
        <strain>PC1</strain>
    </source>
</reference>
<protein>
    <recommendedName>
        <fullName evidence="1">G/U mismatch-specific DNA glycosylase</fullName>
        <ecNumber evidence="1">3.2.2.28</ecNumber>
    </recommendedName>
    <alternativeName>
        <fullName evidence="1">Double-strand-specific uracil glycosylase</fullName>
    </alternativeName>
    <alternativeName>
        <fullName evidence="1">Mismatch-specific uracil DNA-glycosylase</fullName>
        <shortName evidence="1">MUG</shortName>
    </alternativeName>
</protein>
<accession>C6DKG5</accession>